<proteinExistence type="inferred from homology"/>
<organism>
    <name type="scientific">Streptococcus equi subsp. zooepidemicus (strain H70)</name>
    <dbReference type="NCBI Taxonomy" id="553483"/>
    <lineage>
        <taxon>Bacteria</taxon>
        <taxon>Bacillati</taxon>
        <taxon>Bacillota</taxon>
        <taxon>Bacilli</taxon>
        <taxon>Lactobacillales</taxon>
        <taxon>Streptococcaceae</taxon>
        <taxon>Streptococcus</taxon>
    </lineage>
</organism>
<keyword id="KW-0665">Pyrimidine biosynthesis</keyword>
<keyword id="KW-0808">Transferase</keyword>
<sequence>MSVVNNRVALKHLVSMEHLTNEEVMGLISRGSEYKAGKVAIKDNSRHFAANLFFENSTRTHKSFEVAENKLGLRVLDFNADTSAVNKGETLYDTVLTMSALGTEICVIRHPEDDYYQQLIDSPTITASIVNGGDGSGQHPSQCLLDLLTIYEEFGHFDGLKIAIAGDLTHSRVAKSNMQILKRLGAELYFYGPEQWYSSEFDSYGRYMAIDHIIDQLDVLMLLRVQHERHDGSQSFSKEDYHRQFGLTEERYRRLKDSAIIMHPAPVNRDVEIADHLVEAPKARIVAQMANGVFVRMAIIEAILNGRNENV</sequence>
<evidence type="ECO:0000255" key="1">
    <source>
        <dbReference type="HAMAP-Rule" id="MF_00001"/>
    </source>
</evidence>
<feature type="chain" id="PRO_1000201600" description="Aspartate carbamoyltransferase catalytic subunit">
    <location>
        <begin position="1"/>
        <end position="311"/>
    </location>
</feature>
<feature type="binding site" evidence="1">
    <location>
        <position position="59"/>
    </location>
    <ligand>
        <name>carbamoyl phosphate</name>
        <dbReference type="ChEBI" id="CHEBI:58228"/>
    </ligand>
</feature>
<feature type="binding site" evidence="1">
    <location>
        <position position="60"/>
    </location>
    <ligand>
        <name>carbamoyl phosphate</name>
        <dbReference type="ChEBI" id="CHEBI:58228"/>
    </ligand>
</feature>
<feature type="binding site" evidence="1">
    <location>
        <position position="87"/>
    </location>
    <ligand>
        <name>L-aspartate</name>
        <dbReference type="ChEBI" id="CHEBI:29991"/>
    </ligand>
</feature>
<feature type="binding site" evidence="1">
    <location>
        <position position="109"/>
    </location>
    <ligand>
        <name>carbamoyl phosphate</name>
        <dbReference type="ChEBI" id="CHEBI:58228"/>
    </ligand>
</feature>
<feature type="binding site" evidence="1">
    <location>
        <position position="139"/>
    </location>
    <ligand>
        <name>carbamoyl phosphate</name>
        <dbReference type="ChEBI" id="CHEBI:58228"/>
    </ligand>
</feature>
<feature type="binding site" evidence="1">
    <location>
        <position position="142"/>
    </location>
    <ligand>
        <name>carbamoyl phosphate</name>
        <dbReference type="ChEBI" id="CHEBI:58228"/>
    </ligand>
</feature>
<feature type="binding site" evidence="1">
    <location>
        <position position="172"/>
    </location>
    <ligand>
        <name>L-aspartate</name>
        <dbReference type="ChEBI" id="CHEBI:29991"/>
    </ligand>
</feature>
<feature type="binding site" evidence="1">
    <location>
        <position position="224"/>
    </location>
    <ligand>
        <name>L-aspartate</name>
        <dbReference type="ChEBI" id="CHEBI:29991"/>
    </ligand>
</feature>
<feature type="binding site" evidence="1">
    <location>
        <position position="265"/>
    </location>
    <ligand>
        <name>carbamoyl phosphate</name>
        <dbReference type="ChEBI" id="CHEBI:58228"/>
    </ligand>
</feature>
<feature type="binding site" evidence="1">
    <location>
        <position position="266"/>
    </location>
    <ligand>
        <name>carbamoyl phosphate</name>
        <dbReference type="ChEBI" id="CHEBI:58228"/>
    </ligand>
</feature>
<protein>
    <recommendedName>
        <fullName evidence="1">Aspartate carbamoyltransferase catalytic subunit</fullName>
        <ecNumber evidence="1">2.1.3.2</ecNumber>
    </recommendedName>
    <alternativeName>
        <fullName evidence="1">Aspartate transcarbamylase</fullName>
        <shortName evidence="1">ATCase</shortName>
    </alternativeName>
</protein>
<accession>C0ME83</accession>
<gene>
    <name evidence="1" type="primary">pyrB</name>
    <name type="ordered locus">SZO_08460</name>
</gene>
<dbReference type="EC" id="2.1.3.2" evidence="1"/>
<dbReference type="EMBL" id="FM204884">
    <property type="protein sequence ID" value="CAW99040.1"/>
    <property type="molecule type" value="Genomic_DNA"/>
</dbReference>
<dbReference type="SMR" id="C0ME83"/>
<dbReference type="KEGG" id="seq:SZO_08460"/>
<dbReference type="eggNOG" id="COG0540">
    <property type="taxonomic scope" value="Bacteria"/>
</dbReference>
<dbReference type="HOGENOM" id="CLU_043846_2_1_9"/>
<dbReference type="UniPathway" id="UPA00070">
    <property type="reaction ID" value="UER00116"/>
</dbReference>
<dbReference type="Proteomes" id="UP000001368">
    <property type="component" value="Chromosome"/>
</dbReference>
<dbReference type="GO" id="GO:0005829">
    <property type="term" value="C:cytosol"/>
    <property type="evidence" value="ECO:0007669"/>
    <property type="project" value="TreeGrafter"/>
</dbReference>
<dbReference type="GO" id="GO:0016597">
    <property type="term" value="F:amino acid binding"/>
    <property type="evidence" value="ECO:0007669"/>
    <property type="project" value="InterPro"/>
</dbReference>
<dbReference type="GO" id="GO:0004070">
    <property type="term" value="F:aspartate carbamoyltransferase activity"/>
    <property type="evidence" value="ECO:0007669"/>
    <property type="project" value="UniProtKB-UniRule"/>
</dbReference>
<dbReference type="GO" id="GO:0006207">
    <property type="term" value="P:'de novo' pyrimidine nucleobase biosynthetic process"/>
    <property type="evidence" value="ECO:0007669"/>
    <property type="project" value="InterPro"/>
</dbReference>
<dbReference type="GO" id="GO:0044205">
    <property type="term" value="P:'de novo' UMP biosynthetic process"/>
    <property type="evidence" value="ECO:0007669"/>
    <property type="project" value="UniProtKB-UniRule"/>
</dbReference>
<dbReference type="GO" id="GO:0006520">
    <property type="term" value="P:amino acid metabolic process"/>
    <property type="evidence" value="ECO:0007669"/>
    <property type="project" value="InterPro"/>
</dbReference>
<dbReference type="FunFam" id="3.40.50.1370:FF:000011">
    <property type="entry name" value="Aspartate carbamoyltransferase"/>
    <property type="match status" value="1"/>
</dbReference>
<dbReference type="Gene3D" id="3.40.50.1370">
    <property type="entry name" value="Aspartate/ornithine carbamoyltransferase"/>
    <property type="match status" value="2"/>
</dbReference>
<dbReference type="HAMAP" id="MF_00001">
    <property type="entry name" value="Asp_carb_tr"/>
    <property type="match status" value="1"/>
</dbReference>
<dbReference type="InterPro" id="IPR006132">
    <property type="entry name" value="Asp/Orn_carbamoyltranf_P-bd"/>
</dbReference>
<dbReference type="InterPro" id="IPR006130">
    <property type="entry name" value="Asp/Orn_carbamoylTrfase"/>
</dbReference>
<dbReference type="InterPro" id="IPR036901">
    <property type="entry name" value="Asp/Orn_carbamoylTrfase_sf"/>
</dbReference>
<dbReference type="InterPro" id="IPR002082">
    <property type="entry name" value="Asp_carbamoyltransf"/>
</dbReference>
<dbReference type="InterPro" id="IPR006131">
    <property type="entry name" value="Asp_carbamoyltransf_Asp/Orn-bd"/>
</dbReference>
<dbReference type="NCBIfam" id="TIGR00670">
    <property type="entry name" value="asp_carb_tr"/>
    <property type="match status" value="1"/>
</dbReference>
<dbReference type="NCBIfam" id="NF002032">
    <property type="entry name" value="PRK00856.1"/>
    <property type="match status" value="1"/>
</dbReference>
<dbReference type="PANTHER" id="PTHR45753:SF6">
    <property type="entry name" value="ASPARTATE CARBAMOYLTRANSFERASE"/>
    <property type="match status" value="1"/>
</dbReference>
<dbReference type="PANTHER" id="PTHR45753">
    <property type="entry name" value="ORNITHINE CARBAMOYLTRANSFERASE, MITOCHONDRIAL"/>
    <property type="match status" value="1"/>
</dbReference>
<dbReference type="Pfam" id="PF00185">
    <property type="entry name" value="OTCace"/>
    <property type="match status" value="1"/>
</dbReference>
<dbReference type="Pfam" id="PF02729">
    <property type="entry name" value="OTCace_N"/>
    <property type="match status" value="1"/>
</dbReference>
<dbReference type="PRINTS" id="PR00100">
    <property type="entry name" value="AOTCASE"/>
</dbReference>
<dbReference type="PRINTS" id="PR00101">
    <property type="entry name" value="ATCASE"/>
</dbReference>
<dbReference type="SUPFAM" id="SSF53671">
    <property type="entry name" value="Aspartate/ornithine carbamoyltransferase"/>
    <property type="match status" value="1"/>
</dbReference>
<dbReference type="PROSITE" id="PS00097">
    <property type="entry name" value="CARBAMOYLTRANSFERASE"/>
    <property type="match status" value="1"/>
</dbReference>
<name>PYRB_STRS7</name>
<reference key="1">
    <citation type="journal article" date="2009" name="PLoS Pathog.">
        <title>Genomic evidence for the evolution of Streptococcus equi: host restriction, increased virulence, and genetic exchange with human pathogens.</title>
        <authorList>
            <person name="Holden M.T.G."/>
            <person name="Heather Z."/>
            <person name="Paillot R."/>
            <person name="Steward K.F."/>
            <person name="Webb K."/>
            <person name="Ainslie F."/>
            <person name="Jourdan T."/>
            <person name="Bason N.C."/>
            <person name="Holroyd N.E."/>
            <person name="Mungall K."/>
            <person name="Quail M.A."/>
            <person name="Sanders M."/>
            <person name="Simmonds M."/>
            <person name="Willey D."/>
            <person name="Brooks K."/>
            <person name="Aanensen D.M."/>
            <person name="Spratt B.G."/>
            <person name="Jolley K.A."/>
            <person name="Maiden M.C.J."/>
            <person name="Kehoe M."/>
            <person name="Chanter N."/>
            <person name="Bentley S.D."/>
            <person name="Robinson C."/>
            <person name="Maskell D.J."/>
            <person name="Parkhill J."/>
            <person name="Waller A.S."/>
        </authorList>
    </citation>
    <scope>NUCLEOTIDE SEQUENCE [LARGE SCALE GENOMIC DNA]</scope>
    <source>
        <strain>H70</strain>
    </source>
</reference>
<comment type="function">
    <text evidence="1">Catalyzes the condensation of carbamoyl phosphate and aspartate to form carbamoyl aspartate and inorganic phosphate, the committed step in the de novo pyrimidine nucleotide biosynthesis pathway.</text>
</comment>
<comment type="catalytic activity">
    <reaction evidence="1">
        <text>carbamoyl phosphate + L-aspartate = N-carbamoyl-L-aspartate + phosphate + H(+)</text>
        <dbReference type="Rhea" id="RHEA:20013"/>
        <dbReference type="ChEBI" id="CHEBI:15378"/>
        <dbReference type="ChEBI" id="CHEBI:29991"/>
        <dbReference type="ChEBI" id="CHEBI:32814"/>
        <dbReference type="ChEBI" id="CHEBI:43474"/>
        <dbReference type="ChEBI" id="CHEBI:58228"/>
        <dbReference type="EC" id="2.1.3.2"/>
    </reaction>
</comment>
<comment type="pathway">
    <text evidence="1">Pyrimidine metabolism; UMP biosynthesis via de novo pathway; (S)-dihydroorotate from bicarbonate: step 2/3.</text>
</comment>
<comment type="subunit">
    <text evidence="1">Heterododecamer (2C3:3R2) of six catalytic PyrB chains organized as two trimers (C3), and six regulatory PyrI chains organized as three dimers (R2).</text>
</comment>
<comment type="similarity">
    <text evidence="1">Belongs to the aspartate/ornithine carbamoyltransferase superfamily. ATCase family.</text>
</comment>